<name>GCSH_METNO</name>
<accession>B8IU03</accession>
<gene>
    <name evidence="1" type="primary">gcvH</name>
    <name type="ordered locus">Mnod_6034</name>
</gene>
<evidence type="ECO:0000255" key="1">
    <source>
        <dbReference type="HAMAP-Rule" id="MF_00272"/>
    </source>
</evidence>
<evidence type="ECO:0000255" key="2">
    <source>
        <dbReference type="PROSITE-ProRule" id="PRU01066"/>
    </source>
</evidence>
<keyword id="KW-0450">Lipoyl</keyword>
<keyword id="KW-1185">Reference proteome</keyword>
<reference key="1">
    <citation type="submission" date="2009-01" db="EMBL/GenBank/DDBJ databases">
        <title>Complete sequence of chromosome of Methylobacterium nodulans ORS 2060.</title>
        <authorList>
            <consortium name="US DOE Joint Genome Institute"/>
            <person name="Lucas S."/>
            <person name="Copeland A."/>
            <person name="Lapidus A."/>
            <person name="Glavina del Rio T."/>
            <person name="Dalin E."/>
            <person name="Tice H."/>
            <person name="Bruce D."/>
            <person name="Goodwin L."/>
            <person name="Pitluck S."/>
            <person name="Sims D."/>
            <person name="Brettin T."/>
            <person name="Detter J.C."/>
            <person name="Han C."/>
            <person name="Larimer F."/>
            <person name="Land M."/>
            <person name="Hauser L."/>
            <person name="Kyrpides N."/>
            <person name="Ivanova N."/>
            <person name="Marx C.J."/>
            <person name="Richardson P."/>
        </authorList>
    </citation>
    <scope>NUCLEOTIDE SEQUENCE [LARGE SCALE GENOMIC DNA]</scope>
    <source>
        <strain>LMG 21967 / CNCM I-2342 / ORS 2060</strain>
    </source>
</reference>
<feature type="chain" id="PRO_1000132425" description="Glycine cleavage system H protein">
    <location>
        <begin position="1"/>
        <end position="120"/>
    </location>
</feature>
<feature type="domain" description="Lipoyl-binding" evidence="2">
    <location>
        <begin position="17"/>
        <end position="99"/>
    </location>
</feature>
<feature type="modified residue" description="N6-lipoyllysine" evidence="1">
    <location>
        <position position="58"/>
    </location>
</feature>
<proteinExistence type="inferred from homology"/>
<sequence>MLRFTEEHEWLKLDGEIATVGITSHAAEQLGDLVFVELPKVGAVLTKGEAAAVVESVKAASDVYAPLDGEVTEINEAVVAAPETVNADPQGAGWLYRMRLKDPSAMEALMDEAAYAAFPK</sequence>
<protein>
    <recommendedName>
        <fullName evidence="1">Glycine cleavage system H protein</fullName>
    </recommendedName>
</protein>
<dbReference type="EMBL" id="CP001349">
    <property type="protein sequence ID" value="ACL60861.1"/>
    <property type="molecule type" value="Genomic_DNA"/>
</dbReference>
<dbReference type="RefSeq" id="WP_015932454.1">
    <property type="nucleotide sequence ID" value="NC_011894.1"/>
</dbReference>
<dbReference type="SMR" id="B8IU03"/>
<dbReference type="STRING" id="460265.Mnod_6034"/>
<dbReference type="KEGG" id="mno:Mnod_6034"/>
<dbReference type="eggNOG" id="COG0509">
    <property type="taxonomic scope" value="Bacteria"/>
</dbReference>
<dbReference type="HOGENOM" id="CLU_097408_2_2_5"/>
<dbReference type="OrthoDB" id="9796712at2"/>
<dbReference type="Proteomes" id="UP000008207">
    <property type="component" value="Chromosome"/>
</dbReference>
<dbReference type="GO" id="GO:0005737">
    <property type="term" value="C:cytoplasm"/>
    <property type="evidence" value="ECO:0007669"/>
    <property type="project" value="TreeGrafter"/>
</dbReference>
<dbReference type="GO" id="GO:0005960">
    <property type="term" value="C:glycine cleavage complex"/>
    <property type="evidence" value="ECO:0007669"/>
    <property type="project" value="InterPro"/>
</dbReference>
<dbReference type="GO" id="GO:0019464">
    <property type="term" value="P:glycine decarboxylation via glycine cleavage system"/>
    <property type="evidence" value="ECO:0007669"/>
    <property type="project" value="UniProtKB-UniRule"/>
</dbReference>
<dbReference type="CDD" id="cd06848">
    <property type="entry name" value="GCS_H"/>
    <property type="match status" value="1"/>
</dbReference>
<dbReference type="Gene3D" id="2.40.50.100">
    <property type="match status" value="1"/>
</dbReference>
<dbReference type="HAMAP" id="MF_00272">
    <property type="entry name" value="GcvH"/>
    <property type="match status" value="1"/>
</dbReference>
<dbReference type="InterPro" id="IPR003016">
    <property type="entry name" value="2-oxoA_DH_lipoyl-BS"/>
</dbReference>
<dbReference type="InterPro" id="IPR000089">
    <property type="entry name" value="Biotin_lipoyl"/>
</dbReference>
<dbReference type="InterPro" id="IPR002930">
    <property type="entry name" value="GCV_H"/>
</dbReference>
<dbReference type="InterPro" id="IPR033753">
    <property type="entry name" value="GCV_H/Fam206"/>
</dbReference>
<dbReference type="InterPro" id="IPR017453">
    <property type="entry name" value="GCV_H_sub"/>
</dbReference>
<dbReference type="InterPro" id="IPR011053">
    <property type="entry name" value="Single_hybrid_motif"/>
</dbReference>
<dbReference type="NCBIfam" id="TIGR00527">
    <property type="entry name" value="gcvH"/>
    <property type="match status" value="1"/>
</dbReference>
<dbReference type="NCBIfam" id="NF002270">
    <property type="entry name" value="PRK01202.1"/>
    <property type="match status" value="1"/>
</dbReference>
<dbReference type="PANTHER" id="PTHR11715">
    <property type="entry name" value="GLYCINE CLEAVAGE SYSTEM H PROTEIN"/>
    <property type="match status" value="1"/>
</dbReference>
<dbReference type="PANTHER" id="PTHR11715:SF3">
    <property type="entry name" value="GLYCINE CLEAVAGE SYSTEM H PROTEIN-RELATED"/>
    <property type="match status" value="1"/>
</dbReference>
<dbReference type="Pfam" id="PF01597">
    <property type="entry name" value="GCV_H"/>
    <property type="match status" value="1"/>
</dbReference>
<dbReference type="SUPFAM" id="SSF51230">
    <property type="entry name" value="Single hybrid motif"/>
    <property type="match status" value="1"/>
</dbReference>
<dbReference type="PROSITE" id="PS50968">
    <property type="entry name" value="BIOTINYL_LIPOYL"/>
    <property type="match status" value="1"/>
</dbReference>
<dbReference type="PROSITE" id="PS00189">
    <property type="entry name" value="LIPOYL"/>
    <property type="match status" value="1"/>
</dbReference>
<comment type="function">
    <text evidence="1">The glycine cleavage system catalyzes the degradation of glycine. The H protein shuttles the methylamine group of glycine from the P protein to the T protein.</text>
</comment>
<comment type="cofactor">
    <cofactor evidence="1">
        <name>(R)-lipoate</name>
        <dbReference type="ChEBI" id="CHEBI:83088"/>
    </cofactor>
    <text evidence="1">Binds 1 lipoyl cofactor covalently.</text>
</comment>
<comment type="subunit">
    <text evidence="1">The glycine cleavage system is composed of four proteins: P, T, L and H.</text>
</comment>
<comment type="similarity">
    <text evidence="1">Belongs to the GcvH family.</text>
</comment>
<organism>
    <name type="scientific">Methylobacterium nodulans (strain LMG 21967 / CNCM I-2342 / ORS 2060)</name>
    <dbReference type="NCBI Taxonomy" id="460265"/>
    <lineage>
        <taxon>Bacteria</taxon>
        <taxon>Pseudomonadati</taxon>
        <taxon>Pseudomonadota</taxon>
        <taxon>Alphaproteobacteria</taxon>
        <taxon>Hyphomicrobiales</taxon>
        <taxon>Methylobacteriaceae</taxon>
        <taxon>Methylobacterium</taxon>
    </lineage>
</organism>